<feature type="chain" id="PRO_1000127062" description="UPF0181 protein YPTS_1774">
    <location>
        <begin position="1"/>
        <end position="85"/>
    </location>
</feature>
<feature type="region of interest" description="Disordered" evidence="2">
    <location>
        <begin position="57"/>
        <end position="85"/>
    </location>
</feature>
<feature type="compositionally biased region" description="Basic and acidic residues" evidence="2">
    <location>
        <begin position="57"/>
        <end position="72"/>
    </location>
</feature>
<feature type="compositionally biased region" description="Acidic residues" evidence="2">
    <location>
        <begin position="73"/>
        <end position="85"/>
    </location>
</feature>
<sequence length="85" mass="9736">MLAGMPSLSHEEQQEAVERIHKFMSEGMSSGEAIALVAAEIRERHQNDPQAMAIFEDHDFDEHTESDYRRDDEPDADDIEDLYEG</sequence>
<proteinExistence type="inferred from homology"/>
<reference key="1">
    <citation type="submission" date="2008-04" db="EMBL/GenBank/DDBJ databases">
        <title>Complete sequence of Yersinia pseudotuberculosis PB1/+.</title>
        <authorList>
            <person name="Copeland A."/>
            <person name="Lucas S."/>
            <person name="Lapidus A."/>
            <person name="Glavina del Rio T."/>
            <person name="Dalin E."/>
            <person name="Tice H."/>
            <person name="Bruce D."/>
            <person name="Goodwin L."/>
            <person name="Pitluck S."/>
            <person name="Munk A.C."/>
            <person name="Brettin T."/>
            <person name="Detter J.C."/>
            <person name="Han C."/>
            <person name="Tapia R."/>
            <person name="Schmutz J."/>
            <person name="Larimer F."/>
            <person name="Land M."/>
            <person name="Hauser L."/>
            <person name="Challacombe J.F."/>
            <person name="Green L."/>
            <person name="Lindler L.E."/>
            <person name="Nikolich M.P."/>
            <person name="Richardson P."/>
        </authorList>
    </citation>
    <scope>NUCLEOTIDE SEQUENCE [LARGE SCALE GENOMIC DNA]</scope>
    <source>
        <strain>PB1/+</strain>
    </source>
</reference>
<name>Y1774_YERPB</name>
<organism>
    <name type="scientific">Yersinia pseudotuberculosis serotype IB (strain PB1/+)</name>
    <dbReference type="NCBI Taxonomy" id="502801"/>
    <lineage>
        <taxon>Bacteria</taxon>
        <taxon>Pseudomonadati</taxon>
        <taxon>Pseudomonadota</taxon>
        <taxon>Gammaproteobacteria</taxon>
        <taxon>Enterobacterales</taxon>
        <taxon>Yersiniaceae</taxon>
        <taxon>Yersinia</taxon>
    </lineage>
</organism>
<protein>
    <recommendedName>
        <fullName evidence="1">UPF0181 protein YPTS_1774</fullName>
    </recommendedName>
</protein>
<gene>
    <name type="ordered locus">YPTS_1774</name>
</gene>
<comment type="similarity">
    <text evidence="1">Belongs to the UPF0181 family.</text>
</comment>
<accession>B2K0H2</accession>
<evidence type="ECO:0000255" key="1">
    <source>
        <dbReference type="HAMAP-Rule" id="MF_00507"/>
    </source>
</evidence>
<evidence type="ECO:0000256" key="2">
    <source>
        <dbReference type="SAM" id="MobiDB-lite"/>
    </source>
</evidence>
<dbReference type="EMBL" id="CP001048">
    <property type="protein sequence ID" value="ACC88741.1"/>
    <property type="molecule type" value="Genomic_DNA"/>
</dbReference>
<dbReference type="RefSeq" id="WP_011192154.1">
    <property type="nucleotide sequence ID" value="NZ_CP009780.1"/>
</dbReference>
<dbReference type="SMR" id="B2K0H2"/>
<dbReference type="KEGG" id="ypb:YPTS_1774"/>
<dbReference type="PATRIC" id="fig|502801.10.peg.1152"/>
<dbReference type="HAMAP" id="MF_00507">
    <property type="entry name" value="UPF0181"/>
    <property type="match status" value="1"/>
</dbReference>
<dbReference type="InterPro" id="IPR005371">
    <property type="entry name" value="UPF0181"/>
</dbReference>
<dbReference type="NCBIfam" id="NF003476">
    <property type="entry name" value="PRK05114.1"/>
    <property type="match status" value="1"/>
</dbReference>
<dbReference type="Pfam" id="PF03701">
    <property type="entry name" value="UPF0181"/>
    <property type="match status" value="1"/>
</dbReference>